<organism>
    <name type="scientific">Agrobacterium fabrum (strain C58 / ATCC 33970)</name>
    <name type="common">Agrobacterium tumefaciens (strain C58)</name>
    <dbReference type="NCBI Taxonomy" id="176299"/>
    <lineage>
        <taxon>Bacteria</taxon>
        <taxon>Pseudomonadati</taxon>
        <taxon>Pseudomonadota</taxon>
        <taxon>Alphaproteobacteria</taxon>
        <taxon>Hyphomicrobiales</taxon>
        <taxon>Rhizobiaceae</taxon>
        <taxon>Rhizobium/Agrobacterium group</taxon>
        <taxon>Agrobacterium</taxon>
        <taxon>Agrobacterium tumefaciens complex</taxon>
    </lineage>
</organism>
<protein>
    <recommendedName>
        <fullName evidence="1">Urease subunit alpha</fullName>
        <ecNumber evidence="1">3.5.1.5</ecNumber>
    </recommendedName>
    <alternativeName>
        <fullName evidence="1">Urea amidohydrolase subunit alpha</fullName>
    </alternativeName>
</protein>
<feature type="chain" id="PRO_0000234130" description="Urease subunit alpha">
    <location>
        <begin position="1"/>
        <end position="569"/>
    </location>
</feature>
<feature type="domain" description="Urease" evidence="1">
    <location>
        <begin position="131"/>
        <end position="569"/>
    </location>
</feature>
<feature type="active site" description="Proton donor" evidence="1">
    <location>
        <position position="321"/>
    </location>
</feature>
<feature type="binding site" evidence="1">
    <location>
        <position position="136"/>
    </location>
    <ligand>
        <name>Ni(2+)</name>
        <dbReference type="ChEBI" id="CHEBI:49786"/>
        <label>1</label>
    </ligand>
</feature>
<feature type="binding site" evidence="1">
    <location>
        <position position="138"/>
    </location>
    <ligand>
        <name>Ni(2+)</name>
        <dbReference type="ChEBI" id="CHEBI:49786"/>
        <label>1</label>
    </ligand>
</feature>
<feature type="binding site" description="via carbamate group" evidence="1">
    <location>
        <position position="218"/>
    </location>
    <ligand>
        <name>Ni(2+)</name>
        <dbReference type="ChEBI" id="CHEBI:49786"/>
        <label>1</label>
    </ligand>
</feature>
<feature type="binding site" description="via carbamate group" evidence="1">
    <location>
        <position position="218"/>
    </location>
    <ligand>
        <name>Ni(2+)</name>
        <dbReference type="ChEBI" id="CHEBI:49786"/>
        <label>2</label>
    </ligand>
</feature>
<feature type="binding site" evidence="1">
    <location>
        <position position="220"/>
    </location>
    <ligand>
        <name>substrate</name>
    </ligand>
</feature>
<feature type="binding site" evidence="1">
    <location>
        <position position="247"/>
    </location>
    <ligand>
        <name>Ni(2+)</name>
        <dbReference type="ChEBI" id="CHEBI:49786"/>
        <label>2</label>
    </ligand>
</feature>
<feature type="binding site" evidence="1">
    <location>
        <position position="273"/>
    </location>
    <ligand>
        <name>Ni(2+)</name>
        <dbReference type="ChEBI" id="CHEBI:49786"/>
        <label>2</label>
    </ligand>
</feature>
<feature type="binding site" evidence="1">
    <location>
        <position position="361"/>
    </location>
    <ligand>
        <name>Ni(2+)</name>
        <dbReference type="ChEBI" id="CHEBI:49786"/>
        <label>1</label>
    </ligand>
</feature>
<feature type="modified residue" description="N6-carboxylysine" evidence="1">
    <location>
        <position position="218"/>
    </location>
</feature>
<name>URE1_AGRFC</name>
<reference key="1">
    <citation type="journal article" date="2001" name="Science">
        <title>The genome of the natural genetic engineer Agrobacterium tumefaciens C58.</title>
        <authorList>
            <person name="Wood D.W."/>
            <person name="Setubal J.C."/>
            <person name="Kaul R."/>
            <person name="Monks D.E."/>
            <person name="Kitajima J.P."/>
            <person name="Okura V.K."/>
            <person name="Zhou Y."/>
            <person name="Chen L."/>
            <person name="Wood G.E."/>
            <person name="Almeida N.F. Jr."/>
            <person name="Woo L."/>
            <person name="Chen Y."/>
            <person name="Paulsen I.T."/>
            <person name="Eisen J.A."/>
            <person name="Karp P.D."/>
            <person name="Bovee D. Sr."/>
            <person name="Chapman P."/>
            <person name="Clendenning J."/>
            <person name="Deatherage G."/>
            <person name="Gillet W."/>
            <person name="Grant C."/>
            <person name="Kutyavin T."/>
            <person name="Levy R."/>
            <person name="Li M.-J."/>
            <person name="McClelland E."/>
            <person name="Palmieri A."/>
            <person name="Raymond C."/>
            <person name="Rouse G."/>
            <person name="Saenphimmachak C."/>
            <person name="Wu Z."/>
            <person name="Romero P."/>
            <person name="Gordon D."/>
            <person name="Zhang S."/>
            <person name="Yoo H."/>
            <person name="Tao Y."/>
            <person name="Biddle P."/>
            <person name="Jung M."/>
            <person name="Krespan W."/>
            <person name="Perry M."/>
            <person name="Gordon-Kamm B."/>
            <person name="Liao L."/>
            <person name="Kim S."/>
            <person name="Hendrick C."/>
            <person name="Zhao Z.-Y."/>
            <person name="Dolan M."/>
            <person name="Chumley F."/>
            <person name="Tingey S.V."/>
            <person name="Tomb J.-F."/>
            <person name="Gordon M.P."/>
            <person name="Olson M.V."/>
            <person name="Nester E.W."/>
        </authorList>
    </citation>
    <scope>NUCLEOTIDE SEQUENCE [LARGE SCALE GENOMIC DNA]</scope>
    <source>
        <strain>C58 / ATCC 33970</strain>
    </source>
</reference>
<reference key="2">
    <citation type="journal article" date="2001" name="Science">
        <title>Genome sequence of the plant pathogen and biotechnology agent Agrobacterium tumefaciens C58.</title>
        <authorList>
            <person name="Goodner B."/>
            <person name="Hinkle G."/>
            <person name="Gattung S."/>
            <person name="Miller N."/>
            <person name="Blanchard M."/>
            <person name="Qurollo B."/>
            <person name="Goldman B.S."/>
            <person name="Cao Y."/>
            <person name="Askenazi M."/>
            <person name="Halling C."/>
            <person name="Mullin L."/>
            <person name="Houmiel K."/>
            <person name="Gordon J."/>
            <person name="Vaudin M."/>
            <person name="Iartchouk O."/>
            <person name="Epp A."/>
            <person name="Liu F."/>
            <person name="Wollam C."/>
            <person name="Allinger M."/>
            <person name="Doughty D."/>
            <person name="Scott C."/>
            <person name="Lappas C."/>
            <person name="Markelz B."/>
            <person name="Flanagan C."/>
            <person name="Crowell C."/>
            <person name="Gurson J."/>
            <person name="Lomo C."/>
            <person name="Sear C."/>
            <person name="Strub G."/>
            <person name="Cielo C."/>
            <person name="Slater S."/>
        </authorList>
    </citation>
    <scope>NUCLEOTIDE SEQUENCE [LARGE SCALE GENOMIC DNA]</scope>
    <source>
        <strain>C58 / ATCC 33970</strain>
    </source>
</reference>
<keyword id="KW-0963">Cytoplasm</keyword>
<keyword id="KW-0378">Hydrolase</keyword>
<keyword id="KW-0479">Metal-binding</keyword>
<keyword id="KW-0533">Nickel</keyword>
<keyword id="KW-1185">Reference proteome</keyword>
<sequence>MPYKISRAAYAGMFGPTVGDKVRLADTELFIEIEKDHTTYGEEVKFGGGKVIRDGMGQSQATRAEGAVDTVITNAVIVDHSGIYKADVGLKNGRIHAIGKAGNPDTQPGVTIIVGPSTEAIAGEGKILTAGGMDAHIHYICPQQIEEALMSGVTCMLGGGSGPAHGTLATTCTGAWHIERMIESFDAFPMNLALAGKGNASLPAPLEEMILAGASSLKLHEDWGTTPAAIDNCLTVADEYDVQVMIHTDTLNESGFVEDTVAAIRGRTIHAFHTEGAGGGHAPDIIKVCGNPNVIPSSTNPTRPYTVNTLAEHLDMLMVCHHLSPSIPEDIAFAESRIRKETIAAEDILHDIGAFSIISSDSQAMGRVGEVAIRTWQTADKMKRQRGRLKEETGENDNFRVRRYIAKYTINPAIAQGVSHEIGSVEVGKRADLVLWNPAFFGVKPEMVLLGGSIAAAPMGDPNASIPTPQPMHYRPMFAAYGKLRTNSSVTFVSQASLDGGLAQRLGVAKKLLAVKNVRGGISKASMIHNSLTPHIEVDPETYEVRADGELLTCEPATVLPMAQRYFLF</sequence>
<comment type="catalytic activity">
    <reaction evidence="1">
        <text>urea + 2 H2O + H(+) = hydrogencarbonate + 2 NH4(+)</text>
        <dbReference type="Rhea" id="RHEA:20557"/>
        <dbReference type="ChEBI" id="CHEBI:15377"/>
        <dbReference type="ChEBI" id="CHEBI:15378"/>
        <dbReference type="ChEBI" id="CHEBI:16199"/>
        <dbReference type="ChEBI" id="CHEBI:17544"/>
        <dbReference type="ChEBI" id="CHEBI:28938"/>
        <dbReference type="EC" id="3.5.1.5"/>
    </reaction>
</comment>
<comment type="cofactor">
    <cofactor evidence="1">
        <name>Ni cation</name>
        <dbReference type="ChEBI" id="CHEBI:25516"/>
    </cofactor>
    <text evidence="1">Binds 2 nickel ions per subunit.</text>
</comment>
<comment type="pathway">
    <text evidence="1">Nitrogen metabolism; urea degradation; CO(2) and NH(3) from urea (urease route): step 1/1.</text>
</comment>
<comment type="subunit">
    <text evidence="1">Heterotrimer of UreA (gamma), UreB (beta) and UreC (alpha) subunits. Three heterotrimers associate to form the active enzyme.</text>
</comment>
<comment type="subcellular location">
    <subcellularLocation>
        <location evidence="1">Cytoplasm</location>
    </subcellularLocation>
</comment>
<comment type="PTM">
    <text evidence="1">Carboxylation allows a single lysine to coordinate two nickel ions.</text>
</comment>
<comment type="similarity">
    <text evidence="1">Belongs to the metallo-dependent hydrolases superfamily. Urease alpha subunit family.</text>
</comment>
<dbReference type="EC" id="3.5.1.5" evidence="1"/>
<dbReference type="EMBL" id="AE007869">
    <property type="protein sequence ID" value="AAK88138.1"/>
    <property type="molecule type" value="Genomic_DNA"/>
</dbReference>
<dbReference type="PIR" id="A97648">
    <property type="entry name" value="A97648"/>
</dbReference>
<dbReference type="PIR" id="AG2871">
    <property type="entry name" value="AG2871"/>
</dbReference>
<dbReference type="RefSeq" id="NP_355353.1">
    <property type="nucleotide sequence ID" value="NC_003062.2"/>
</dbReference>
<dbReference type="RefSeq" id="WP_006315008.1">
    <property type="nucleotide sequence ID" value="NC_003062.2"/>
</dbReference>
<dbReference type="SMR" id="Q8UCT2"/>
<dbReference type="STRING" id="176299.Atu2401"/>
<dbReference type="MEROPS" id="M38.982"/>
<dbReference type="EnsemblBacteria" id="AAK88138">
    <property type="protein sequence ID" value="AAK88138"/>
    <property type="gene ID" value="Atu2401"/>
</dbReference>
<dbReference type="GeneID" id="1134439"/>
<dbReference type="KEGG" id="atu:Atu2401"/>
<dbReference type="PATRIC" id="fig|176299.10.peg.2410"/>
<dbReference type="eggNOG" id="COG0804">
    <property type="taxonomic scope" value="Bacteria"/>
</dbReference>
<dbReference type="HOGENOM" id="CLU_000980_0_0_5"/>
<dbReference type="OrthoDB" id="9802793at2"/>
<dbReference type="PhylomeDB" id="Q8UCT2"/>
<dbReference type="BioCyc" id="AGRO:ATU2401-MONOMER"/>
<dbReference type="UniPathway" id="UPA00258">
    <property type="reaction ID" value="UER00370"/>
</dbReference>
<dbReference type="Proteomes" id="UP000000813">
    <property type="component" value="Chromosome circular"/>
</dbReference>
<dbReference type="GO" id="GO:0005737">
    <property type="term" value="C:cytoplasm"/>
    <property type="evidence" value="ECO:0007669"/>
    <property type="project" value="UniProtKB-SubCell"/>
</dbReference>
<dbReference type="GO" id="GO:0016151">
    <property type="term" value="F:nickel cation binding"/>
    <property type="evidence" value="ECO:0007669"/>
    <property type="project" value="UniProtKB-UniRule"/>
</dbReference>
<dbReference type="GO" id="GO:0009039">
    <property type="term" value="F:urease activity"/>
    <property type="evidence" value="ECO:0007669"/>
    <property type="project" value="UniProtKB-UniRule"/>
</dbReference>
<dbReference type="GO" id="GO:0043419">
    <property type="term" value="P:urea catabolic process"/>
    <property type="evidence" value="ECO:0007669"/>
    <property type="project" value="UniProtKB-UniRule"/>
</dbReference>
<dbReference type="CDD" id="cd00375">
    <property type="entry name" value="Urease_alpha"/>
    <property type="match status" value="1"/>
</dbReference>
<dbReference type="Gene3D" id="3.20.20.140">
    <property type="entry name" value="Metal-dependent hydrolases"/>
    <property type="match status" value="1"/>
</dbReference>
<dbReference type="Gene3D" id="2.30.40.10">
    <property type="entry name" value="Urease, subunit C, domain 1"/>
    <property type="match status" value="1"/>
</dbReference>
<dbReference type="HAMAP" id="MF_01953">
    <property type="entry name" value="Urease_alpha"/>
    <property type="match status" value="1"/>
</dbReference>
<dbReference type="InterPro" id="IPR006680">
    <property type="entry name" value="Amidohydro-rel"/>
</dbReference>
<dbReference type="InterPro" id="IPR011059">
    <property type="entry name" value="Metal-dep_hydrolase_composite"/>
</dbReference>
<dbReference type="InterPro" id="IPR032466">
    <property type="entry name" value="Metal_Hydrolase"/>
</dbReference>
<dbReference type="InterPro" id="IPR011612">
    <property type="entry name" value="Urease_alpha_N_dom"/>
</dbReference>
<dbReference type="InterPro" id="IPR050112">
    <property type="entry name" value="Urease_alpha_subunit"/>
</dbReference>
<dbReference type="InterPro" id="IPR017950">
    <property type="entry name" value="Urease_AS"/>
</dbReference>
<dbReference type="InterPro" id="IPR005848">
    <property type="entry name" value="Urease_asu"/>
</dbReference>
<dbReference type="InterPro" id="IPR017951">
    <property type="entry name" value="Urease_asu_c"/>
</dbReference>
<dbReference type="InterPro" id="IPR029754">
    <property type="entry name" value="Urease_Ni-bd"/>
</dbReference>
<dbReference type="NCBIfam" id="NF009685">
    <property type="entry name" value="PRK13206.1"/>
    <property type="match status" value="1"/>
</dbReference>
<dbReference type="NCBIfam" id="NF009686">
    <property type="entry name" value="PRK13207.1"/>
    <property type="match status" value="1"/>
</dbReference>
<dbReference type="NCBIfam" id="TIGR01792">
    <property type="entry name" value="urease_alph"/>
    <property type="match status" value="1"/>
</dbReference>
<dbReference type="PANTHER" id="PTHR43440">
    <property type="entry name" value="UREASE"/>
    <property type="match status" value="1"/>
</dbReference>
<dbReference type="PANTHER" id="PTHR43440:SF1">
    <property type="entry name" value="UREASE"/>
    <property type="match status" value="1"/>
</dbReference>
<dbReference type="Pfam" id="PF01979">
    <property type="entry name" value="Amidohydro_1"/>
    <property type="match status" value="1"/>
</dbReference>
<dbReference type="Pfam" id="PF00449">
    <property type="entry name" value="Urease_alpha"/>
    <property type="match status" value="1"/>
</dbReference>
<dbReference type="PRINTS" id="PR01752">
    <property type="entry name" value="UREASE"/>
</dbReference>
<dbReference type="SUPFAM" id="SSF51338">
    <property type="entry name" value="Composite domain of metallo-dependent hydrolases"/>
    <property type="match status" value="2"/>
</dbReference>
<dbReference type="SUPFAM" id="SSF51556">
    <property type="entry name" value="Metallo-dependent hydrolases"/>
    <property type="match status" value="1"/>
</dbReference>
<dbReference type="PROSITE" id="PS01120">
    <property type="entry name" value="UREASE_1"/>
    <property type="match status" value="1"/>
</dbReference>
<dbReference type="PROSITE" id="PS00145">
    <property type="entry name" value="UREASE_2"/>
    <property type="match status" value="1"/>
</dbReference>
<dbReference type="PROSITE" id="PS51368">
    <property type="entry name" value="UREASE_3"/>
    <property type="match status" value="1"/>
</dbReference>
<evidence type="ECO:0000255" key="1">
    <source>
        <dbReference type="HAMAP-Rule" id="MF_01953"/>
    </source>
</evidence>
<gene>
    <name evidence="1" type="primary">ureC</name>
    <name type="ordered locus">Atu2401</name>
    <name type="ORF">AGR_C_4357</name>
</gene>
<proteinExistence type="inferred from homology"/>
<accession>Q8UCT2</accession>
<accession>Q7CX53</accession>